<organism>
    <name type="scientific">Saccharomyces cerevisiae (strain ATCC 204508 / S288c)</name>
    <name type="common">Baker's yeast</name>
    <dbReference type="NCBI Taxonomy" id="559292"/>
    <lineage>
        <taxon>Eukaryota</taxon>
        <taxon>Fungi</taxon>
        <taxon>Dikarya</taxon>
        <taxon>Ascomycota</taxon>
        <taxon>Saccharomycotina</taxon>
        <taxon>Saccharomycetes</taxon>
        <taxon>Saccharomycetales</taxon>
        <taxon>Saccharomycetaceae</taxon>
        <taxon>Saccharomyces</taxon>
    </lineage>
</organism>
<accession>P38071</accession>
<accession>D6VQ28</accession>
<accession>Q6Q5P2</accession>
<reference key="1">
    <citation type="journal article" date="1994" name="J. Biol. Chem.">
        <title>A protein which binds preferentially to single-stranded core sequence of autonomously replicating sequence is essential for respiratory function in mitochondrial of Saccharomyces cerevisiae.</title>
        <authorList>
            <person name="Yamazoe M."/>
            <person name="Shirahige K."/>
            <person name="Rashid M.B."/>
            <person name="Kaneko Y."/>
            <person name="Nakayama T."/>
            <person name="Ogasawara N."/>
            <person name="Yoshikawa H."/>
        </authorList>
    </citation>
    <scope>NUCLEOTIDE SEQUENCE [GENOMIC DNA]</scope>
    <scope>PROTEIN SEQUENCE OF 10-25</scope>
    <source>
        <strain>ATCC 26786 / X2180-1A</strain>
    </source>
</reference>
<reference key="2">
    <citation type="journal article" date="1994" name="Yeast">
        <title>The complete sequence of a 33 kb fragment on the right arm of chromosome II from Saccharomyces cerevisiae reveals 16 open reading frames, including ten new open reading frames, five previously identified genes and a homologue of the SCO1 gene.</title>
        <authorList>
            <person name="Smits P.H.M."/>
            <person name="de Haan M."/>
            <person name="Maat C."/>
            <person name="Grivell L.A."/>
        </authorList>
    </citation>
    <scope>NUCLEOTIDE SEQUENCE [GENOMIC DNA]</scope>
    <source>
        <strain>ATCC 204508 / S288c</strain>
    </source>
</reference>
<reference key="3">
    <citation type="journal article" date="1994" name="EMBO J.">
        <title>Complete DNA sequence of yeast chromosome II.</title>
        <authorList>
            <person name="Feldmann H."/>
            <person name="Aigle M."/>
            <person name="Aljinovic G."/>
            <person name="Andre B."/>
            <person name="Baclet M.C."/>
            <person name="Barthe C."/>
            <person name="Baur A."/>
            <person name="Becam A.-M."/>
            <person name="Biteau N."/>
            <person name="Boles E."/>
            <person name="Brandt T."/>
            <person name="Brendel M."/>
            <person name="Brueckner M."/>
            <person name="Bussereau F."/>
            <person name="Christiansen C."/>
            <person name="Contreras R."/>
            <person name="Crouzet M."/>
            <person name="Cziepluch C."/>
            <person name="Demolis N."/>
            <person name="Delaveau T."/>
            <person name="Doignon F."/>
            <person name="Domdey H."/>
            <person name="Duesterhus S."/>
            <person name="Dubois E."/>
            <person name="Dujon B."/>
            <person name="El Bakkoury M."/>
            <person name="Entian K.-D."/>
            <person name="Feuermann M."/>
            <person name="Fiers W."/>
            <person name="Fobo G.M."/>
            <person name="Fritz C."/>
            <person name="Gassenhuber J."/>
            <person name="Glansdorff N."/>
            <person name="Goffeau A."/>
            <person name="Grivell L.A."/>
            <person name="de Haan M."/>
            <person name="Hein C."/>
            <person name="Herbert C.J."/>
            <person name="Hollenberg C.P."/>
            <person name="Holmstroem K."/>
            <person name="Jacq C."/>
            <person name="Jacquet M."/>
            <person name="Jauniaux J.-C."/>
            <person name="Jonniaux J.-L."/>
            <person name="Kallesoee T."/>
            <person name="Kiesau P."/>
            <person name="Kirchrath L."/>
            <person name="Koetter P."/>
            <person name="Korol S."/>
            <person name="Liebl S."/>
            <person name="Logghe M."/>
            <person name="Lohan A.J.E."/>
            <person name="Louis E.J."/>
            <person name="Li Z.Y."/>
            <person name="Maat M.J."/>
            <person name="Mallet L."/>
            <person name="Mannhaupt G."/>
            <person name="Messenguy F."/>
            <person name="Miosga T."/>
            <person name="Molemans F."/>
            <person name="Mueller S."/>
            <person name="Nasr F."/>
            <person name="Obermaier B."/>
            <person name="Perea J."/>
            <person name="Pierard A."/>
            <person name="Piravandi E."/>
            <person name="Pohl F.M."/>
            <person name="Pohl T.M."/>
            <person name="Potier S."/>
            <person name="Proft M."/>
            <person name="Purnelle B."/>
            <person name="Ramezani Rad M."/>
            <person name="Rieger M."/>
            <person name="Rose M."/>
            <person name="Schaaff-Gerstenschlaeger I."/>
            <person name="Scherens B."/>
            <person name="Schwarzlose C."/>
            <person name="Skala J."/>
            <person name="Slonimski P.P."/>
            <person name="Smits P.H.M."/>
            <person name="Souciet J.-L."/>
            <person name="Steensma H.Y."/>
            <person name="Stucka R."/>
            <person name="Urrestarazu L.A."/>
            <person name="van der Aart Q.J.M."/>
            <person name="Van Dyck L."/>
            <person name="Vassarotti A."/>
            <person name="Vetter I."/>
            <person name="Vierendeels F."/>
            <person name="Vissers S."/>
            <person name="Wagner G."/>
            <person name="de Wergifosse P."/>
            <person name="Wolfe K.H."/>
            <person name="Zagulski M."/>
            <person name="Zimmermann F.K."/>
            <person name="Mewes H.-W."/>
            <person name="Kleine K."/>
        </authorList>
    </citation>
    <scope>NUCLEOTIDE SEQUENCE [LARGE SCALE GENOMIC DNA]</scope>
    <source>
        <strain>ATCC 204508 / S288c</strain>
    </source>
</reference>
<reference key="4">
    <citation type="journal article" date="2014" name="G3 (Bethesda)">
        <title>The reference genome sequence of Saccharomyces cerevisiae: Then and now.</title>
        <authorList>
            <person name="Engel S.R."/>
            <person name="Dietrich F.S."/>
            <person name="Fisk D.G."/>
            <person name="Binkley G."/>
            <person name="Balakrishnan R."/>
            <person name="Costanzo M.C."/>
            <person name="Dwight S.S."/>
            <person name="Hitz B.C."/>
            <person name="Karra K."/>
            <person name="Nash R.S."/>
            <person name="Weng S."/>
            <person name="Wong E.D."/>
            <person name="Lloyd P."/>
            <person name="Skrzypek M.S."/>
            <person name="Miyasato S.R."/>
            <person name="Simison M."/>
            <person name="Cherry J.M."/>
        </authorList>
    </citation>
    <scope>GENOME REANNOTATION</scope>
    <source>
        <strain>ATCC 204508 / S288c</strain>
    </source>
</reference>
<reference key="5">
    <citation type="journal article" date="2007" name="Genome Res.">
        <title>Approaching a complete repository of sequence-verified protein-encoding clones for Saccharomyces cerevisiae.</title>
        <authorList>
            <person name="Hu Y."/>
            <person name="Rolfs A."/>
            <person name="Bhullar B."/>
            <person name="Murthy T.V.S."/>
            <person name="Zhu C."/>
            <person name="Berger M.F."/>
            <person name="Camargo A.A."/>
            <person name="Kelley F."/>
            <person name="McCarron S."/>
            <person name="Jepson D."/>
            <person name="Richardson A."/>
            <person name="Raphael J."/>
            <person name="Moreira D."/>
            <person name="Taycher E."/>
            <person name="Zuo D."/>
            <person name="Mohr S."/>
            <person name="Kane M.F."/>
            <person name="Williamson J."/>
            <person name="Simpson A.J.G."/>
            <person name="Bulyk M.L."/>
            <person name="Harlow E."/>
            <person name="Marsischky G."/>
            <person name="Kolodner R.D."/>
            <person name="LaBaer J."/>
        </authorList>
    </citation>
    <scope>NUCLEOTIDE SEQUENCE [GENOMIC DNA]</scope>
    <source>
        <strain>ATCC 204508 / S288c</strain>
    </source>
</reference>
<reference key="6">
    <citation type="journal article" date="2001" name="Biochemistry">
        <title>Yeast mitochondrial dehydrogenases are associated in a supramolecular complex.</title>
        <authorList>
            <person name="Grandier-Vazeille X."/>
            <person name="Bathany K."/>
            <person name="Chaignepain S."/>
            <person name="Camougrand N."/>
            <person name="Manon S."/>
            <person name="Schmitter J.-M."/>
        </authorList>
    </citation>
    <scope>SUBCELLULAR LOCATION</scope>
</reference>
<reference key="7">
    <citation type="journal article" date="2001" name="Mol. Cell. Biol.">
        <title>Candida tropicalis Etr1p and Saccharomyces cerevisiae Ybr026p (Mrf1'p), 2-enoyl thioester reductases essential for mitochondrial respiratory competence.</title>
        <authorList>
            <person name="Torkko J.M."/>
            <person name="Koivuranta K.T."/>
            <person name="Miinalainen I.J."/>
            <person name="Yagi A.I."/>
            <person name="Schmitz W."/>
            <person name="Kastaniotis A.J."/>
            <person name="Airenne T.T."/>
            <person name="Gurvitz A."/>
            <person name="Hiltunen K.J."/>
        </authorList>
    </citation>
    <scope>FUNCTION</scope>
    <scope>CATALYTIC ACTIVITY</scope>
    <scope>SUBUNIT</scope>
    <scope>SUBCELLULAR LOCATION</scope>
</reference>
<reference key="8">
    <citation type="journal article" date="2003" name="J. Mol. Biol.">
        <title>Structure-function analysis of enoyl thioester reductase involved in mitochondrial maintenance.</title>
        <authorList>
            <person name="Airenne T.T."/>
            <person name="Torkko J.M."/>
            <person name="Van den plas S."/>
            <person name="Sormunen R.T."/>
            <person name="Kastaniotis A.J."/>
            <person name="Wierenga R.K."/>
            <person name="Hiltunen J.K."/>
        </authorList>
    </citation>
    <scope>FUNCTION</scope>
    <scope>MUTAGENESIS OF TYR-73</scope>
</reference>
<reference key="9">
    <citation type="journal article" date="2003" name="Nature">
        <title>Global analysis of protein expression in yeast.</title>
        <authorList>
            <person name="Ghaemmaghami S."/>
            <person name="Huh W.-K."/>
            <person name="Bower K."/>
            <person name="Howson R.W."/>
            <person name="Belle A."/>
            <person name="Dephoure N."/>
            <person name="O'Shea E.K."/>
            <person name="Weissman J.S."/>
        </authorList>
    </citation>
    <scope>LEVEL OF PROTEIN EXPRESSION [LARGE SCALE ANALYSIS]</scope>
</reference>
<reference key="10">
    <citation type="journal article" date="2003" name="Proc. Natl. Acad. Sci. U.S.A.">
        <title>The proteome of Saccharomyces cerevisiae mitochondria.</title>
        <authorList>
            <person name="Sickmann A."/>
            <person name="Reinders J."/>
            <person name="Wagner Y."/>
            <person name="Joppich C."/>
            <person name="Zahedi R.P."/>
            <person name="Meyer H.E."/>
            <person name="Schoenfisch B."/>
            <person name="Perschil I."/>
            <person name="Chacinska A."/>
            <person name="Guiard B."/>
            <person name="Rehling P."/>
            <person name="Pfanner N."/>
            <person name="Meisinger C."/>
        </authorList>
    </citation>
    <scope>SUBCELLULAR LOCATION [LARGE SCALE ANALYSIS]</scope>
    <source>
        <strain>ATCC 76625 / YPH499</strain>
    </source>
</reference>
<reference key="11">
    <citation type="journal article" date="2008" name="Mol. Cell. Proteomics">
        <title>A multidimensional chromatography technology for in-depth phosphoproteome analysis.</title>
        <authorList>
            <person name="Albuquerque C.P."/>
            <person name="Smolka M.B."/>
            <person name="Payne S.H."/>
            <person name="Bafna V."/>
            <person name="Eng J."/>
            <person name="Zhou H."/>
        </authorList>
    </citation>
    <scope>PHOSPHORYLATION [LARGE SCALE ANALYSIS] AT SER-339</scope>
    <scope>IDENTIFICATION BY MASS SPECTROMETRY [LARGE SCALE ANALYSIS]</scope>
</reference>
<reference key="12">
    <citation type="journal article" date="2016" name="Mol. Microbiol.">
        <title>ZAP1-mediated modulation of triacylglycerol levels in yeast by transcriptional control of mitochondrial fatty acid biosynthesis.</title>
        <authorList>
            <person name="Singh N."/>
            <person name="Yadav K.K."/>
            <person name="Rajasekharan R."/>
        </authorList>
    </citation>
    <scope>INDUCTION</scope>
</reference>
<feature type="transit peptide" description="Mitochondrion" evidence="8">
    <location>
        <begin position="1"/>
        <end position="9"/>
    </location>
</feature>
<feature type="chain" id="PRO_0000160924" description="Enoyl-[acyl-carrier-protein] reductase, mitochondrial">
    <location>
        <begin position="10"/>
        <end position="380"/>
    </location>
</feature>
<feature type="active site" description="Proton donor" evidence="1">
    <location>
        <position position="73"/>
    </location>
</feature>
<feature type="binding site" evidence="1">
    <location>
        <position position="157"/>
    </location>
    <ligand>
        <name>NADP(+)</name>
        <dbReference type="ChEBI" id="CHEBI:58349"/>
    </ligand>
</feature>
<feature type="binding site" evidence="1">
    <location>
        <begin position="185"/>
        <end position="188"/>
    </location>
    <ligand>
        <name>NADP(+)</name>
        <dbReference type="ChEBI" id="CHEBI:58349"/>
    </ligand>
</feature>
<feature type="binding site" evidence="1">
    <location>
        <begin position="208"/>
        <end position="210"/>
    </location>
    <ligand>
        <name>NADP(+)</name>
        <dbReference type="ChEBI" id="CHEBI:58349"/>
    </ligand>
</feature>
<feature type="binding site" evidence="1">
    <location>
        <begin position="283"/>
        <end position="286"/>
    </location>
    <ligand>
        <name>NADP(+)</name>
        <dbReference type="ChEBI" id="CHEBI:58349"/>
    </ligand>
</feature>
<feature type="binding site" evidence="1">
    <location>
        <begin position="308"/>
        <end position="310"/>
    </location>
    <ligand>
        <name>NADP(+)</name>
        <dbReference type="ChEBI" id="CHEBI:58349"/>
    </ligand>
</feature>
<feature type="binding site" evidence="1">
    <location>
        <position position="373"/>
    </location>
    <ligand>
        <name>NADP(+)</name>
        <dbReference type="ChEBI" id="CHEBI:58349"/>
    </ligand>
</feature>
<feature type="modified residue" description="Phosphoserine" evidence="15">
    <location>
        <position position="339"/>
    </location>
</feature>
<feature type="mutagenesis site" description="0.1% of catalytic activity. No specific ARS1 binding." evidence="4">
    <original>Y</original>
    <variation>N</variation>
    <location>
        <position position="73"/>
    </location>
</feature>
<feature type="sequence conflict" description="In Ref. 5; AAS56198." evidence="11" ref="5">
    <original>I</original>
    <variation>T</variation>
    <location>
        <position position="24"/>
    </location>
</feature>
<name>ETR1_YEAST</name>
<evidence type="ECO:0000250" key="1">
    <source>
        <dbReference type="UniProtKB" id="Q8WZM3"/>
    </source>
</evidence>
<evidence type="ECO:0000269" key="2">
    <source>
    </source>
</evidence>
<evidence type="ECO:0000269" key="3">
    <source>
    </source>
</evidence>
<evidence type="ECO:0000269" key="4">
    <source>
    </source>
</evidence>
<evidence type="ECO:0000269" key="5">
    <source>
    </source>
</evidence>
<evidence type="ECO:0000269" key="6">
    <source>
    </source>
</evidence>
<evidence type="ECO:0000269" key="7">
    <source>
    </source>
</evidence>
<evidence type="ECO:0000269" key="8">
    <source>
    </source>
</evidence>
<evidence type="ECO:0000303" key="9">
    <source>
    </source>
</evidence>
<evidence type="ECO:0000303" key="10">
    <source>
    </source>
</evidence>
<evidence type="ECO:0000305" key="11"/>
<evidence type="ECO:0000305" key="12">
    <source>
    </source>
</evidence>
<evidence type="ECO:0000305" key="13">
    <source>
    </source>
</evidence>
<evidence type="ECO:0000305" key="14">
    <source>
    </source>
</evidence>
<evidence type="ECO:0007744" key="15">
    <source>
    </source>
</evidence>
<proteinExistence type="evidence at protein level"/>
<keyword id="KW-0903">Direct protein sequencing</keyword>
<keyword id="KW-0238">DNA-binding</keyword>
<keyword id="KW-0275">Fatty acid biosynthesis</keyword>
<keyword id="KW-0276">Fatty acid metabolism</keyword>
<keyword id="KW-0444">Lipid biosynthesis</keyword>
<keyword id="KW-0443">Lipid metabolism</keyword>
<keyword id="KW-0496">Mitochondrion</keyword>
<keyword id="KW-0521">NADP</keyword>
<keyword id="KW-0560">Oxidoreductase</keyword>
<keyword id="KW-0597">Phosphoprotein</keyword>
<keyword id="KW-1185">Reference proteome</keyword>
<keyword id="KW-0809">Transit peptide</keyword>
<comment type="function">
    <text evidence="3 4">Catalyzes the NADPH-dependent reduction of trans-2-enoyl thioesters in mitochondrial fatty acid synthesis (fatty acid synthesis type II). Fatty acid chain elongation in mitochondria uses acyl carrier protein (ACP) as an acyl group carrier, but the enzyme accepts both ACP and CoA thioesters as substrates in vitro. Required for respiration and the maintenance of the mitochondrial compartment.</text>
</comment>
<comment type="catalytic activity">
    <reaction evidence="12 13">
        <text>a 2,3-saturated acyl-[ACP] + NADP(+) = a (2E)-enoyl-[ACP] + NADPH + H(+)</text>
        <dbReference type="Rhea" id="RHEA:22564"/>
        <dbReference type="Rhea" id="RHEA-COMP:9925"/>
        <dbReference type="Rhea" id="RHEA-COMP:9926"/>
        <dbReference type="ChEBI" id="CHEBI:15378"/>
        <dbReference type="ChEBI" id="CHEBI:57783"/>
        <dbReference type="ChEBI" id="CHEBI:58349"/>
        <dbReference type="ChEBI" id="CHEBI:78784"/>
        <dbReference type="ChEBI" id="CHEBI:78785"/>
        <dbReference type="EC" id="1.3.1.104"/>
    </reaction>
</comment>
<comment type="catalytic activity">
    <reaction evidence="3">
        <text>(2E,4E)-hexadienoyl-CoA + NADPH + H(+) = (4E)-hexenoyl-CoA + NADP(+)</text>
        <dbReference type="Rhea" id="RHEA:54908"/>
        <dbReference type="ChEBI" id="CHEBI:15378"/>
        <dbReference type="ChEBI" id="CHEBI:57783"/>
        <dbReference type="ChEBI" id="CHEBI:58349"/>
        <dbReference type="ChEBI" id="CHEBI:84788"/>
        <dbReference type="ChEBI" id="CHEBI:138404"/>
    </reaction>
    <physiologicalReaction direction="left-to-right" evidence="12">
        <dbReference type="Rhea" id="RHEA:54909"/>
    </physiologicalReaction>
</comment>
<comment type="catalytic activity">
    <reaction evidence="3">
        <text>(2E)-hexenoyl-CoA + NADPH + H(+) = hexanoyl-CoA + NADP(+)</text>
        <dbReference type="Rhea" id="RHEA:44956"/>
        <dbReference type="ChEBI" id="CHEBI:15378"/>
        <dbReference type="ChEBI" id="CHEBI:57783"/>
        <dbReference type="ChEBI" id="CHEBI:58349"/>
        <dbReference type="ChEBI" id="CHEBI:62077"/>
        <dbReference type="ChEBI" id="CHEBI:62620"/>
    </reaction>
    <physiologicalReaction direction="left-to-right" evidence="12">
        <dbReference type="Rhea" id="RHEA:44957"/>
    </physiologicalReaction>
</comment>
<comment type="subunit">
    <text evidence="3 8">Homodimer or in a complex with other proteins (PubMed:11509667). Interacts with ARS1 (PubMed:8195160).</text>
</comment>
<comment type="subcellular location">
    <subcellularLocation>
        <location evidence="2 3 6">Mitochondrion matrix</location>
    </subcellularLocation>
</comment>
<comment type="induction">
    <text evidence="7">Positively regulated by the zinc-responsive transcriptional regulator ZAP1.</text>
</comment>
<comment type="miscellaneous">
    <text evidence="5">Present with 1560 molecules/cell in log phase SD medium.</text>
</comment>
<comment type="similarity">
    <text evidence="11">Belongs to the zinc-containing alcohol dehydrogenase family. Quinone oxidoreductase subfamily.</text>
</comment>
<comment type="caution">
    <text evidence="12 14">Was originally (PubMed:8195160) thought to be a nuclear protein involved in transcriptional regulation of genes required for the functional assembly of mitochondrial respiratory proteins. This was later proven not to be the case (PubMed:11509667).</text>
</comment>
<gene>
    <name type="primary">ETR1</name>
    <name type="synonym">MRF1</name>
    <name type="synonym">MRF1'</name>
    <name type="ordered locus">YBR026C</name>
    <name type="ORF">YBR0310</name>
</gene>
<dbReference type="EC" id="1.3.1.104" evidence="12 13"/>
<dbReference type="EMBL" id="D26606">
    <property type="protein sequence ID" value="BAA05651.1"/>
    <property type="molecule type" value="Genomic_DNA"/>
</dbReference>
<dbReference type="EMBL" id="Z35895">
    <property type="protein sequence ID" value="CAA84968.1"/>
    <property type="molecule type" value="Genomic_DNA"/>
</dbReference>
<dbReference type="EMBL" id="X76078">
    <property type="protein sequence ID" value="CAA53683.1"/>
    <property type="molecule type" value="Genomic_DNA"/>
</dbReference>
<dbReference type="EMBL" id="AY557872">
    <property type="protein sequence ID" value="AAS56198.1"/>
    <property type="molecule type" value="Genomic_DNA"/>
</dbReference>
<dbReference type="EMBL" id="BK006936">
    <property type="protein sequence ID" value="DAA07148.1"/>
    <property type="molecule type" value="Genomic_DNA"/>
</dbReference>
<dbReference type="RefSeq" id="NP_009582.1">
    <property type="nucleotide sequence ID" value="NM_001178374.1"/>
</dbReference>
<dbReference type="SMR" id="P38071"/>
<dbReference type="BioGRID" id="32729">
    <property type="interactions" value="420"/>
</dbReference>
<dbReference type="FunCoup" id="P38071">
    <property type="interactions" value="842"/>
</dbReference>
<dbReference type="IntAct" id="P38071">
    <property type="interactions" value="11"/>
</dbReference>
<dbReference type="MINT" id="P38071"/>
<dbReference type="STRING" id="4932.YBR026C"/>
<dbReference type="SwissLipids" id="SLP:000001784"/>
<dbReference type="iPTMnet" id="P38071"/>
<dbReference type="PaxDb" id="4932-YBR026C"/>
<dbReference type="PeptideAtlas" id="P38071"/>
<dbReference type="EnsemblFungi" id="YBR026C_mRNA">
    <property type="protein sequence ID" value="YBR026C"/>
    <property type="gene ID" value="YBR026C"/>
</dbReference>
<dbReference type="GeneID" id="852314"/>
<dbReference type="KEGG" id="sce:YBR026C"/>
<dbReference type="AGR" id="SGD:S000000230"/>
<dbReference type="SGD" id="S000000230">
    <property type="gene designation" value="ETR1"/>
</dbReference>
<dbReference type="VEuPathDB" id="FungiDB:YBR026C"/>
<dbReference type="eggNOG" id="KOG0025">
    <property type="taxonomic scope" value="Eukaryota"/>
</dbReference>
<dbReference type="GeneTree" id="ENSGT00940000156592"/>
<dbReference type="HOGENOM" id="CLU_026673_17_0_1"/>
<dbReference type="InParanoid" id="P38071"/>
<dbReference type="OMA" id="YGYTQSK"/>
<dbReference type="OrthoDB" id="7482721at2759"/>
<dbReference type="BioCyc" id="MetaCyc:G3O-29006-MONOMER"/>
<dbReference type="BioCyc" id="YEAST:G3O-29006-MONOMER"/>
<dbReference type="BRENDA" id="1.3.1.10">
    <property type="organism ID" value="984"/>
</dbReference>
<dbReference type="Reactome" id="R-SCE-77346">
    <property type="pathway name" value="Beta oxidation of decanoyl-CoA to octanoyl-CoA-CoA"/>
</dbReference>
<dbReference type="BioGRID-ORCS" id="852314">
    <property type="hits" value="0 hits in 10 CRISPR screens"/>
</dbReference>
<dbReference type="PRO" id="PR:P38071"/>
<dbReference type="Proteomes" id="UP000002311">
    <property type="component" value="Chromosome II"/>
</dbReference>
<dbReference type="RNAct" id="P38071">
    <property type="molecule type" value="protein"/>
</dbReference>
<dbReference type="GO" id="GO:0005759">
    <property type="term" value="C:mitochondrial matrix"/>
    <property type="evidence" value="ECO:0007669"/>
    <property type="project" value="UniProtKB-SubCell"/>
</dbReference>
<dbReference type="GO" id="GO:0005739">
    <property type="term" value="C:mitochondrion"/>
    <property type="evidence" value="ECO:0000314"/>
    <property type="project" value="SGD"/>
</dbReference>
<dbReference type="GO" id="GO:0003677">
    <property type="term" value="F:DNA binding"/>
    <property type="evidence" value="ECO:0007669"/>
    <property type="project" value="UniProtKB-KW"/>
</dbReference>
<dbReference type="GO" id="GO:0141148">
    <property type="term" value="F:enoyl-[acyl-carrier-protein] reductase (NADPH) activity"/>
    <property type="evidence" value="ECO:0007669"/>
    <property type="project" value="UniProtKB-EC"/>
</dbReference>
<dbReference type="GO" id="GO:0009060">
    <property type="term" value="P:aerobic respiration"/>
    <property type="evidence" value="ECO:0000315"/>
    <property type="project" value="SGD"/>
</dbReference>
<dbReference type="GO" id="GO:0006633">
    <property type="term" value="P:fatty acid biosynthetic process"/>
    <property type="evidence" value="ECO:0000315"/>
    <property type="project" value="SGD"/>
</dbReference>
<dbReference type="GO" id="GO:0006631">
    <property type="term" value="P:fatty acid metabolic process"/>
    <property type="evidence" value="ECO:0000318"/>
    <property type="project" value="GO_Central"/>
</dbReference>
<dbReference type="CDD" id="cd08290">
    <property type="entry name" value="ETR"/>
    <property type="match status" value="1"/>
</dbReference>
<dbReference type="FunFam" id="3.90.180.10:FF:000046">
    <property type="entry name" value="2-enoyl thioester reductase"/>
    <property type="match status" value="1"/>
</dbReference>
<dbReference type="FunFam" id="3.40.50.720:FF:000112">
    <property type="entry name" value="Enoyl-[acyl-carrier-protein] reductase 1, mitochondrial"/>
    <property type="match status" value="1"/>
</dbReference>
<dbReference type="Gene3D" id="3.90.180.10">
    <property type="entry name" value="Medium-chain alcohol dehydrogenases, catalytic domain"/>
    <property type="match status" value="1"/>
</dbReference>
<dbReference type="Gene3D" id="3.40.50.720">
    <property type="entry name" value="NAD(P)-binding Rossmann-like Domain"/>
    <property type="match status" value="1"/>
</dbReference>
<dbReference type="InterPro" id="IPR011032">
    <property type="entry name" value="GroES-like_sf"/>
</dbReference>
<dbReference type="InterPro" id="IPR051034">
    <property type="entry name" value="Mito_Enoyl-ACP_Reductase"/>
</dbReference>
<dbReference type="InterPro" id="IPR036291">
    <property type="entry name" value="NAD(P)-bd_dom_sf"/>
</dbReference>
<dbReference type="PANTHER" id="PTHR43981">
    <property type="entry name" value="ENOYL-[ACYL-CARRIER-PROTEIN] REDUCTASE, MITOCHONDRIAL"/>
    <property type="match status" value="1"/>
</dbReference>
<dbReference type="PANTHER" id="PTHR43981:SF2">
    <property type="entry name" value="ENOYL-[ACYL-CARRIER-PROTEIN] REDUCTASE, MITOCHONDRIAL"/>
    <property type="match status" value="1"/>
</dbReference>
<dbReference type="SUPFAM" id="SSF50129">
    <property type="entry name" value="GroES-like"/>
    <property type="match status" value="1"/>
</dbReference>
<dbReference type="SUPFAM" id="SSF51735">
    <property type="entry name" value="NAD(P)-binding Rossmann-fold domains"/>
    <property type="match status" value="1"/>
</dbReference>
<protein>
    <recommendedName>
        <fullName evidence="11">Enoyl-[acyl-carrier-protein] reductase, mitochondrial</fullName>
        <ecNumber evidence="12 13">1.3.1.104</ecNumber>
    </recommendedName>
    <alternativeName>
        <fullName evidence="9">2-enoyl thioester reductase</fullName>
    </alternativeName>
    <alternativeName>
        <fullName evidence="10">Mitochondrial respiratory function protein 1</fullName>
    </alternativeName>
</protein>
<sequence>MLPTFKRYMSSSAHQIPKHFKSLIYSTHEVEDCTKVLSVKNYTPKQDLSQSIVLKTLAFPINPSDINQLQGVYPSRPEKTYDYSTDEPAAIAGNEGVFEVVSLPSGSSKGDLKLGDRVIPLQANQGTWSNYRVFSSSSDLIKVNDLDLFSAATVSVNGCTGFQLVSDYIDWNSNGNEWIIQNAGTSSVSKIVTQVAKAKGIKTLSVIRDRDNFDEVAKVLEDKYGATKVISESQNNDKTFAKEVLSKILGENARVRLALNSVGGKSSASIARKLENNALMLTYGGMSKQPVTLPTSLHIFKGLTSKGYWVTEKNKKNPQSKIDTISDFIKMYNYGHIISPRDEIETLTWNTNTTTDEQLLELVKKGITGKGKKKMVVLEW</sequence>